<proteinExistence type="inferred from homology"/>
<sequence length="295" mass="31826">MRHPDFPVPPRIDAFASWEASLRLAFARRGGRTVLASCRHRGPLRVQKALYPEGEGVCHVVLLHPPAGIAGGDVLDIGIELGAEAHAVLTTPGATKWYKSPGRTAMQQVAIRLDAGARLDWLPQENIVFNQARPVIDLTLDLAPGAAAIGWDITMLGRHAAGESWQEGRIAMHTRLRCEGQPLWIESTAFDAQSPVLGATTGMAGFHVVGTLWAVGAGATEALAETLAEQLPYRDDLRAGVTCLTQDAPGRPSVLLLRVLARRPEDARALLSQTWLALREPIHGVAGRPLRLWAT</sequence>
<reference key="1">
    <citation type="journal article" date="2002" name="Nature">
        <title>Genome sequence of the plant pathogen Ralstonia solanacearum.</title>
        <authorList>
            <person name="Salanoubat M."/>
            <person name="Genin S."/>
            <person name="Artiguenave F."/>
            <person name="Gouzy J."/>
            <person name="Mangenot S."/>
            <person name="Arlat M."/>
            <person name="Billault A."/>
            <person name="Brottier P."/>
            <person name="Camus J.-C."/>
            <person name="Cattolico L."/>
            <person name="Chandler M."/>
            <person name="Choisne N."/>
            <person name="Claudel-Renard C."/>
            <person name="Cunnac S."/>
            <person name="Demange N."/>
            <person name="Gaspin C."/>
            <person name="Lavie M."/>
            <person name="Moisan A."/>
            <person name="Robert C."/>
            <person name="Saurin W."/>
            <person name="Schiex T."/>
            <person name="Siguier P."/>
            <person name="Thebault P."/>
            <person name="Whalen M."/>
            <person name="Wincker P."/>
            <person name="Levy M."/>
            <person name="Weissenbach J."/>
            <person name="Boucher C.A."/>
        </authorList>
    </citation>
    <scope>NUCLEOTIDE SEQUENCE [LARGE SCALE GENOMIC DNA]</scope>
    <source>
        <strain>ATCC BAA-1114 / GMI1000</strain>
    </source>
</reference>
<organism>
    <name type="scientific">Ralstonia nicotianae (strain ATCC BAA-1114 / GMI1000)</name>
    <name type="common">Ralstonia solanacearum</name>
    <dbReference type="NCBI Taxonomy" id="267608"/>
    <lineage>
        <taxon>Bacteria</taxon>
        <taxon>Pseudomonadati</taxon>
        <taxon>Pseudomonadota</taxon>
        <taxon>Betaproteobacteria</taxon>
        <taxon>Burkholderiales</taxon>
        <taxon>Burkholderiaceae</taxon>
        <taxon>Ralstonia</taxon>
        <taxon>Ralstonia solanacearum species complex</taxon>
    </lineage>
</organism>
<gene>
    <name evidence="1" type="primary">ureD</name>
    <name type="ordered locus">RSc2036</name>
</gene>
<comment type="function">
    <text evidence="1">Required for maturation of urease via the functional incorporation of the urease nickel metallocenter.</text>
</comment>
<comment type="subunit">
    <text evidence="1">UreD, UreF and UreG form a complex that acts as a GTP-hydrolysis-dependent molecular chaperone, activating the urease apoprotein by helping to assemble the nickel containing metallocenter of UreC. The UreE protein probably delivers the nickel.</text>
</comment>
<comment type="subcellular location">
    <subcellularLocation>
        <location evidence="1">Cytoplasm</location>
    </subcellularLocation>
</comment>
<comment type="similarity">
    <text evidence="1">Belongs to the UreD family.</text>
</comment>
<protein>
    <recommendedName>
        <fullName evidence="1">Urease accessory protein UreD</fullName>
    </recommendedName>
</protein>
<feature type="chain" id="PRO_0000340500" description="Urease accessory protein UreD">
    <location>
        <begin position="1"/>
        <end position="295"/>
    </location>
</feature>
<accession>Q8XXS7</accession>
<dbReference type="EMBL" id="AL646052">
    <property type="protein sequence ID" value="CAD15738.1"/>
    <property type="molecule type" value="Genomic_DNA"/>
</dbReference>
<dbReference type="RefSeq" id="WP_011001971.1">
    <property type="nucleotide sequence ID" value="NC_003295.1"/>
</dbReference>
<dbReference type="SMR" id="Q8XXS7"/>
<dbReference type="STRING" id="267608.RSc2036"/>
<dbReference type="EnsemblBacteria" id="CAD15738">
    <property type="protein sequence ID" value="CAD15738"/>
    <property type="gene ID" value="RSc2036"/>
</dbReference>
<dbReference type="KEGG" id="rso:RSc2036"/>
<dbReference type="PATRIC" id="fig|267608.8.peg.2068"/>
<dbReference type="eggNOG" id="COG0829">
    <property type="taxonomic scope" value="Bacteria"/>
</dbReference>
<dbReference type="HOGENOM" id="CLU_056339_0_0_4"/>
<dbReference type="Proteomes" id="UP000001436">
    <property type="component" value="Chromosome"/>
</dbReference>
<dbReference type="GO" id="GO:0005737">
    <property type="term" value="C:cytoplasm"/>
    <property type="evidence" value="ECO:0007669"/>
    <property type="project" value="UniProtKB-SubCell"/>
</dbReference>
<dbReference type="GO" id="GO:0016151">
    <property type="term" value="F:nickel cation binding"/>
    <property type="evidence" value="ECO:0007669"/>
    <property type="project" value="UniProtKB-UniRule"/>
</dbReference>
<dbReference type="HAMAP" id="MF_01384">
    <property type="entry name" value="UreD"/>
    <property type="match status" value="1"/>
</dbReference>
<dbReference type="InterPro" id="IPR002669">
    <property type="entry name" value="UreD"/>
</dbReference>
<dbReference type="PANTHER" id="PTHR33643">
    <property type="entry name" value="UREASE ACCESSORY PROTEIN D"/>
    <property type="match status" value="1"/>
</dbReference>
<dbReference type="PANTHER" id="PTHR33643:SF1">
    <property type="entry name" value="UREASE ACCESSORY PROTEIN D"/>
    <property type="match status" value="1"/>
</dbReference>
<dbReference type="Pfam" id="PF01774">
    <property type="entry name" value="UreD"/>
    <property type="match status" value="1"/>
</dbReference>
<dbReference type="SUPFAM" id="SSF56199">
    <property type="entry name" value="Methenyltetrahydromethanopterin cyclohydrolase"/>
    <property type="match status" value="1"/>
</dbReference>
<keyword id="KW-0143">Chaperone</keyword>
<keyword id="KW-0963">Cytoplasm</keyword>
<keyword id="KW-0996">Nickel insertion</keyword>
<keyword id="KW-1185">Reference proteome</keyword>
<name>URED_RALN1</name>
<evidence type="ECO:0000255" key="1">
    <source>
        <dbReference type="HAMAP-Rule" id="MF_01384"/>
    </source>
</evidence>